<accession>Q6KHT6</accession>
<protein>
    <recommendedName>
        <fullName evidence="1">Large ribosomal subunit protein bL32</fullName>
    </recommendedName>
    <alternativeName>
        <fullName evidence="2">50S ribosomal protein L32</fullName>
    </alternativeName>
</protein>
<reference key="1">
    <citation type="journal article" date="2004" name="Genome Res.">
        <title>The complete genome and proteome of Mycoplasma mobile.</title>
        <authorList>
            <person name="Jaffe J.D."/>
            <person name="Stange-Thomann N."/>
            <person name="Smith C."/>
            <person name="DeCaprio D."/>
            <person name="Fisher S."/>
            <person name="Butler J."/>
            <person name="Calvo S."/>
            <person name="Elkins T."/>
            <person name="FitzGerald M.G."/>
            <person name="Hafez N."/>
            <person name="Kodira C.D."/>
            <person name="Major J."/>
            <person name="Wang S."/>
            <person name="Wilkinson J."/>
            <person name="Nicol R."/>
            <person name="Nusbaum C."/>
            <person name="Birren B."/>
            <person name="Berg H.C."/>
            <person name="Church G.M."/>
        </authorList>
    </citation>
    <scope>NUCLEOTIDE SEQUENCE [LARGE SCALE GENOMIC DNA]</scope>
    <source>
        <strain>ATCC 43663 / NCTC 11711 / 163 K</strain>
    </source>
</reference>
<dbReference type="EMBL" id="AE017308">
    <property type="protein sequence ID" value="AAT27842.1"/>
    <property type="molecule type" value="Genomic_DNA"/>
</dbReference>
<dbReference type="RefSeq" id="WP_011264876.1">
    <property type="nucleotide sequence ID" value="NC_006908.1"/>
</dbReference>
<dbReference type="SMR" id="Q6KHT6"/>
<dbReference type="STRING" id="267748.MMOB3560"/>
<dbReference type="KEGG" id="mmo:MMOB3560"/>
<dbReference type="eggNOG" id="COG0333">
    <property type="taxonomic scope" value="Bacteria"/>
</dbReference>
<dbReference type="HOGENOM" id="CLU_129084_1_3_14"/>
<dbReference type="OrthoDB" id="9812874at2"/>
<dbReference type="Proteomes" id="UP000009072">
    <property type="component" value="Chromosome"/>
</dbReference>
<dbReference type="GO" id="GO:0015934">
    <property type="term" value="C:large ribosomal subunit"/>
    <property type="evidence" value="ECO:0007669"/>
    <property type="project" value="InterPro"/>
</dbReference>
<dbReference type="GO" id="GO:0003735">
    <property type="term" value="F:structural constituent of ribosome"/>
    <property type="evidence" value="ECO:0007669"/>
    <property type="project" value="InterPro"/>
</dbReference>
<dbReference type="GO" id="GO:0006412">
    <property type="term" value="P:translation"/>
    <property type="evidence" value="ECO:0007669"/>
    <property type="project" value="UniProtKB-UniRule"/>
</dbReference>
<dbReference type="Gene3D" id="1.20.5.640">
    <property type="entry name" value="Single helix bin"/>
    <property type="match status" value="1"/>
</dbReference>
<dbReference type="HAMAP" id="MF_00340">
    <property type="entry name" value="Ribosomal_bL32"/>
    <property type="match status" value="1"/>
</dbReference>
<dbReference type="InterPro" id="IPR002677">
    <property type="entry name" value="Ribosomal_bL32"/>
</dbReference>
<dbReference type="InterPro" id="IPR044957">
    <property type="entry name" value="Ribosomal_bL32_bact"/>
</dbReference>
<dbReference type="InterPro" id="IPR011332">
    <property type="entry name" value="Ribosomal_zn-bd"/>
</dbReference>
<dbReference type="NCBIfam" id="TIGR01031">
    <property type="entry name" value="rpmF_bact"/>
    <property type="match status" value="1"/>
</dbReference>
<dbReference type="PANTHER" id="PTHR35534">
    <property type="entry name" value="50S RIBOSOMAL PROTEIN L32"/>
    <property type="match status" value="1"/>
</dbReference>
<dbReference type="PANTHER" id="PTHR35534:SF1">
    <property type="entry name" value="LARGE RIBOSOMAL SUBUNIT PROTEIN BL32"/>
    <property type="match status" value="1"/>
</dbReference>
<dbReference type="Pfam" id="PF01783">
    <property type="entry name" value="Ribosomal_L32p"/>
    <property type="match status" value="1"/>
</dbReference>
<dbReference type="SUPFAM" id="SSF57829">
    <property type="entry name" value="Zn-binding ribosomal proteins"/>
    <property type="match status" value="1"/>
</dbReference>
<keyword id="KW-1185">Reference proteome</keyword>
<keyword id="KW-0687">Ribonucleoprotein</keyword>
<keyword id="KW-0689">Ribosomal protein</keyword>
<evidence type="ECO:0000255" key="1">
    <source>
        <dbReference type="HAMAP-Rule" id="MF_00340"/>
    </source>
</evidence>
<evidence type="ECO:0000305" key="2"/>
<name>RL32_MYCM1</name>
<organism>
    <name type="scientific">Mycoplasma mobile (strain ATCC 43663 / 163K / NCTC 11711)</name>
    <name type="common">Mesomycoplasma mobile</name>
    <dbReference type="NCBI Taxonomy" id="267748"/>
    <lineage>
        <taxon>Bacteria</taxon>
        <taxon>Bacillati</taxon>
        <taxon>Mycoplasmatota</taxon>
        <taxon>Mycoplasmoidales</taxon>
        <taxon>Metamycoplasmataceae</taxon>
        <taxon>Mesomycoplasma</taxon>
    </lineage>
</organism>
<feature type="chain" id="PRO_0000172366" description="Large ribosomal subunit protein bL32">
    <location>
        <begin position="1"/>
        <end position="64"/>
    </location>
</feature>
<comment type="similarity">
    <text evidence="1">Belongs to the bacterial ribosomal protein bL32 family.</text>
</comment>
<proteinExistence type="inferred from homology"/>
<gene>
    <name evidence="1" type="primary">rpmF</name>
    <name type="ordered locus">MMOB3560</name>
</gene>
<sequence length="64" mass="7648">MAIVPKRKTSKQRKRLRRSHHALDIQNLVKCSNCSQKIQQHRTCMFCGFYKNKKVEGFQARNDR</sequence>